<evidence type="ECO:0000250" key="1"/>
<evidence type="ECO:0000250" key="2">
    <source>
        <dbReference type="UniProtKB" id="Q9UHI6"/>
    </source>
</evidence>
<evidence type="ECO:0000255" key="3">
    <source>
        <dbReference type="PROSITE-ProRule" id="PRU00541"/>
    </source>
</evidence>
<evidence type="ECO:0000255" key="4">
    <source>
        <dbReference type="PROSITE-ProRule" id="PRU00542"/>
    </source>
</evidence>
<evidence type="ECO:0000256" key="5">
    <source>
        <dbReference type="SAM" id="MobiDB-lite"/>
    </source>
</evidence>
<evidence type="ECO:0000305" key="6"/>
<accession>Q54ZI9</accession>
<accession>Q8MYE9</accession>
<reference key="1">
    <citation type="journal article" date="2002" name="Nature">
        <title>Sequence and analysis of chromosome 2 of Dictyostelium discoideum.</title>
        <authorList>
            <person name="Gloeckner G."/>
            <person name="Eichinger L."/>
            <person name="Szafranski K."/>
            <person name="Pachebat J.A."/>
            <person name="Bankier A.T."/>
            <person name="Dear P.H."/>
            <person name="Lehmann R."/>
            <person name="Baumgart C."/>
            <person name="Parra G."/>
            <person name="Abril J.F."/>
            <person name="Guigo R."/>
            <person name="Kumpf K."/>
            <person name="Tunggal B."/>
            <person name="Cox E.C."/>
            <person name="Quail M.A."/>
            <person name="Platzer M."/>
            <person name="Rosenthal A."/>
            <person name="Noegel A.A."/>
        </authorList>
    </citation>
    <scope>NUCLEOTIDE SEQUENCE [LARGE SCALE GENOMIC DNA]</scope>
    <source>
        <strain>AX4</strain>
    </source>
</reference>
<reference key="2">
    <citation type="journal article" date="2005" name="Nature">
        <title>The genome of the social amoeba Dictyostelium discoideum.</title>
        <authorList>
            <person name="Eichinger L."/>
            <person name="Pachebat J.A."/>
            <person name="Gloeckner G."/>
            <person name="Rajandream M.A."/>
            <person name="Sucgang R."/>
            <person name="Berriman M."/>
            <person name="Song J."/>
            <person name="Olsen R."/>
            <person name="Szafranski K."/>
            <person name="Xu Q."/>
            <person name="Tunggal B."/>
            <person name="Kummerfeld S."/>
            <person name="Madera M."/>
            <person name="Konfortov B.A."/>
            <person name="Rivero F."/>
            <person name="Bankier A.T."/>
            <person name="Lehmann R."/>
            <person name="Hamlin N."/>
            <person name="Davies R."/>
            <person name="Gaudet P."/>
            <person name="Fey P."/>
            <person name="Pilcher K."/>
            <person name="Chen G."/>
            <person name="Saunders D."/>
            <person name="Sodergren E.J."/>
            <person name="Davis P."/>
            <person name="Kerhornou A."/>
            <person name="Nie X."/>
            <person name="Hall N."/>
            <person name="Anjard C."/>
            <person name="Hemphill L."/>
            <person name="Bason N."/>
            <person name="Farbrother P."/>
            <person name="Desany B."/>
            <person name="Just E."/>
            <person name="Morio T."/>
            <person name="Rost R."/>
            <person name="Churcher C.M."/>
            <person name="Cooper J."/>
            <person name="Haydock S."/>
            <person name="van Driessche N."/>
            <person name="Cronin A."/>
            <person name="Goodhead I."/>
            <person name="Muzny D.M."/>
            <person name="Mourier T."/>
            <person name="Pain A."/>
            <person name="Lu M."/>
            <person name="Harper D."/>
            <person name="Lindsay R."/>
            <person name="Hauser H."/>
            <person name="James K.D."/>
            <person name="Quiles M."/>
            <person name="Madan Babu M."/>
            <person name="Saito T."/>
            <person name="Buchrieser C."/>
            <person name="Wardroper A."/>
            <person name="Felder M."/>
            <person name="Thangavelu M."/>
            <person name="Johnson D."/>
            <person name="Knights A."/>
            <person name="Loulseged H."/>
            <person name="Mungall K.L."/>
            <person name="Oliver K."/>
            <person name="Price C."/>
            <person name="Quail M.A."/>
            <person name="Urushihara H."/>
            <person name="Hernandez J."/>
            <person name="Rabbinowitsch E."/>
            <person name="Steffen D."/>
            <person name="Sanders M."/>
            <person name="Ma J."/>
            <person name="Kohara Y."/>
            <person name="Sharp S."/>
            <person name="Simmonds M.N."/>
            <person name="Spiegler S."/>
            <person name="Tivey A."/>
            <person name="Sugano S."/>
            <person name="White B."/>
            <person name="Walker D."/>
            <person name="Woodward J.R."/>
            <person name="Winckler T."/>
            <person name="Tanaka Y."/>
            <person name="Shaulsky G."/>
            <person name="Schleicher M."/>
            <person name="Weinstock G.M."/>
            <person name="Rosenthal A."/>
            <person name="Cox E.C."/>
            <person name="Chisholm R.L."/>
            <person name="Gibbs R.A."/>
            <person name="Loomis W.F."/>
            <person name="Platzer M."/>
            <person name="Kay R.R."/>
            <person name="Williams J.G."/>
            <person name="Dear P.H."/>
            <person name="Noegel A.A."/>
            <person name="Barrell B.G."/>
            <person name="Kuspa A."/>
        </authorList>
    </citation>
    <scope>NUCLEOTIDE SEQUENCE [LARGE SCALE GENOMIC DNA]</scope>
    <source>
        <strain>AX4</strain>
    </source>
</reference>
<keyword id="KW-0067">ATP-binding</keyword>
<keyword id="KW-0963">Cytoplasm</keyword>
<keyword id="KW-0347">Helicase</keyword>
<keyword id="KW-0378">Hydrolase</keyword>
<keyword id="KW-0507">mRNA processing</keyword>
<keyword id="KW-0508">mRNA splicing</keyword>
<keyword id="KW-0547">Nucleotide-binding</keyword>
<keyword id="KW-0539">Nucleus</keyword>
<keyword id="KW-1185">Reference proteome</keyword>
<protein>
    <recommendedName>
        <fullName>Probable ATP-dependent RNA helicase ddx20</fullName>
        <ecNumber>3.6.4.13</ecNumber>
    </recommendedName>
    <alternativeName>
        <fullName>DEAD box protein 20</fullName>
    </alternativeName>
</protein>
<organism>
    <name type="scientific">Dictyostelium discoideum</name>
    <name type="common">Social amoeba</name>
    <dbReference type="NCBI Taxonomy" id="44689"/>
    <lineage>
        <taxon>Eukaryota</taxon>
        <taxon>Amoebozoa</taxon>
        <taxon>Evosea</taxon>
        <taxon>Eumycetozoa</taxon>
        <taxon>Dictyostelia</taxon>
        <taxon>Dictyosteliales</taxon>
        <taxon>Dictyosteliaceae</taxon>
        <taxon>Dictyostelium</taxon>
    </lineage>
</organism>
<gene>
    <name type="primary">ddx20</name>
    <name type="ORF">DDB_G0277527</name>
</gene>
<sequence length="849" mass="99148">MKNKILFSFSNPMNSNSSNNIENNNNSNNNNNNFKNNFKNFSRKRTNDIEIEDNITFSELLLQKEVLKGLEDGGYQRPSPIQLKAIPLGISGVDLIAQAKSGTGKTIVFGVIALECVLRESKLLRQKQELNKTQLTNQTNKQLLEMDDDTYVETMVGIIRKPLVLIIAPTREIAVQIKDVIKSISKYCKRIKCEVFIGGLNSNNNKDENNNNILNNEDVNRLNGTQIIVGTPGKIKSLIENLHLRTDTLKMVIMDEADKLLDASFSKTINWIYSAIGNGNSNKNNSSSGSGIQMLAFSATYPSYLINLLKLYMNNENLVEIRLCSDTPSLEGIKQYYQIFRNDFTENNYKTFQNKCKSLVLVLEQVSFYQAIIFCNHKIRGEELTRQLNREGWPTAFIAGGQNQKDRLSTMSALKSFNIRILVSTDLISRGIDVERVNLVINLDLPKDHETYFHRIGRTGRFGTYGVSITFINMKSIQQQQQQQQQQQQQIENENENENNNNNEGFQEIDFINQLIQEYSVDITERVDNDIIPEELYSYQLSNPNDQQSLANLKLKQQQTILLNKQLEELKINENENENQYQNEDEEEEQEEDDYHYENQHQNEDEEEEQEEDDYHYENQHQNEEEEQEQQEEDDDNYNYENDNDSEEYEFIDDSIIEQTEYYYLNSNNNNNNNKNKYGNTINNNHYRNSSFNGPKNSINNNKFKNKNINNNDQRNSQSNGIKKKVNTNNNNFYPHYYNNPYPQNYYYDYQYFSDNSYYNNNYNNNNNNNNNNNNNNNNNNNNNNNNNNNNNNNNNNNNNNNNNNNNYYQQHGNNPYGYNIPNSIQYSSNQFYYCTCPNCPTMNYHQYI</sequence>
<comment type="function">
    <text evidence="2">The SMN complex catalyzes the assembly of small nuclear ribonucleoproteins (snRNPs), the building blocks of the spliceosome, and thereby plays an important role in the splicing of cellular pre-mRNAs. Most spliceosomal snRNPs contain a common set of Sm proteins SNRPB, SNRPD1, SNRPD2, SNRPD3, SNRPE, SNRPF and SNRPG that assemble in a heptameric protein ring on the Sm site of the small nuclear RNA to form the core snRNP (Sm core). In the cytosol, the Sm proteins SNRPD1, SNRPD2, SNRPE, SNRPF and SNRPG are trapped in an inactive 6S pICln-Sm complex by the chaperone CLNS1A that controls the assembly of the core snRNP. To assemble core snRNPs, the SMN complex accepts the trapped 5Sm proteins from CLNS1A forming an intermediate. Binding of snRNA inside 5Sm triggers eviction of the SMN complex, thereby allowing binding of SNRPD3 and SNRPB to complete assembly of the core snRNP. May also play a role in the metabolism of small nucleolar ribonucleoprotein (snoRNPs) (By similarity).</text>
</comment>
<comment type="catalytic activity">
    <reaction>
        <text>ATP + H2O = ADP + phosphate + H(+)</text>
        <dbReference type="Rhea" id="RHEA:13065"/>
        <dbReference type="ChEBI" id="CHEBI:15377"/>
        <dbReference type="ChEBI" id="CHEBI:15378"/>
        <dbReference type="ChEBI" id="CHEBI:30616"/>
        <dbReference type="ChEBI" id="CHEBI:43474"/>
        <dbReference type="ChEBI" id="CHEBI:456216"/>
        <dbReference type="EC" id="3.6.4.13"/>
    </reaction>
</comment>
<comment type="subunit">
    <text evidence="2">Part of the core SMN complex.</text>
</comment>
<comment type="subcellular location">
    <subcellularLocation>
        <location evidence="2">Cytoplasm</location>
    </subcellularLocation>
    <subcellularLocation>
        <location evidence="2">Nucleus</location>
    </subcellularLocation>
</comment>
<comment type="domain">
    <text>The Q motif is unique to and characteristic of the DEAD box family of RNA helicases and controls ATP binding and hydrolysis.</text>
</comment>
<comment type="similarity">
    <text evidence="6">Belongs to the DEAD box helicase family. DDX20 subfamily.</text>
</comment>
<name>DDX20_DICDI</name>
<feature type="chain" id="PRO_0000327408" description="Probable ATP-dependent RNA helicase ddx20">
    <location>
        <begin position="1"/>
        <end position="849"/>
    </location>
</feature>
<feature type="domain" description="Helicase ATP-binding" evidence="3">
    <location>
        <begin position="86"/>
        <end position="319"/>
    </location>
</feature>
<feature type="domain" description="Helicase C-terminal" evidence="4">
    <location>
        <begin position="355"/>
        <end position="499"/>
    </location>
</feature>
<feature type="region of interest" description="Disordered" evidence="5">
    <location>
        <begin position="9"/>
        <end position="39"/>
    </location>
</feature>
<feature type="region of interest" description="Disordered" evidence="5">
    <location>
        <begin position="480"/>
        <end position="504"/>
    </location>
</feature>
<feature type="region of interest" description="Disordered" evidence="5">
    <location>
        <begin position="572"/>
        <end position="644"/>
    </location>
</feature>
<feature type="region of interest" description="Disordered" evidence="5">
    <location>
        <begin position="667"/>
        <end position="737"/>
    </location>
</feature>
<feature type="region of interest" description="Disordered" evidence="5">
    <location>
        <begin position="761"/>
        <end position="817"/>
    </location>
</feature>
<feature type="short sequence motif" description="Q motif">
    <location>
        <begin position="55"/>
        <end position="83"/>
    </location>
</feature>
<feature type="short sequence motif" description="DEAD box">
    <location>
        <begin position="255"/>
        <end position="258"/>
    </location>
</feature>
<feature type="compositionally biased region" description="Acidic residues" evidence="5">
    <location>
        <begin position="583"/>
        <end position="595"/>
    </location>
</feature>
<feature type="compositionally biased region" description="Acidic residues" evidence="5">
    <location>
        <begin position="604"/>
        <end position="615"/>
    </location>
</feature>
<feature type="compositionally biased region" description="Acidic residues" evidence="5">
    <location>
        <begin position="624"/>
        <end position="644"/>
    </location>
</feature>
<feature type="compositionally biased region" description="Low complexity" evidence="5">
    <location>
        <begin position="667"/>
        <end position="687"/>
    </location>
</feature>
<feature type="compositionally biased region" description="Low complexity" evidence="5">
    <location>
        <begin position="696"/>
        <end position="720"/>
    </location>
</feature>
<feature type="binding site" evidence="1">
    <location>
        <position position="77"/>
    </location>
    <ligand>
        <name>ATP</name>
        <dbReference type="ChEBI" id="CHEBI:30616"/>
    </ligand>
</feature>
<feature type="binding site" evidence="1">
    <location>
        <position position="82"/>
    </location>
    <ligand>
        <name>ATP</name>
        <dbReference type="ChEBI" id="CHEBI:30616"/>
    </ligand>
</feature>
<feature type="binding site" evidence="3">
    <location>
        <begin position="99"/>
        <end position="106"/>
    </location>
    <ligand>
        <name>ATP</name>
        <dbReference type="ChEBI" id="CHEBI:30616"/>
    </ligand>
</feature>
<feature type="binding site" evidence="3">
    <location>
        <begin position="102"/>
        <end position="107"/>
    </location>
    <ligand>
        <name>ATP</name>
        <dbReference type="ChEBI" id="CHEBI:30616"/>
    </ligand>
</feature>
<dbReference type="EC" id="3.6.4.13"/>
<dbReference type="EMBL" id="AAFI02000020">
    <property type="protein sequence ID" value="EAL68726.2"/>
    <property type="molecule type" value="Genomic_DNA"/>
</dbReference>
<dbReference type="RefSeq" id="XP_642653.2">
    <property type="nucleotide sequence ID" value="XM_637561.2"/>
</dbReference>
<dbReference type="SMR" id="Q54ZI9"/>
<dbReference type="STRING" id="44689.Q54ZI9"/>
<dbReference type="PaxDb" id="44689-DDB0266359"/>
<dbReference type="EnsemblProtists" id="EAL68726">
    <property type="protein sequence ID" value="EAL68726"/>
    <property type="gene ID" value="DDB_G0277527"/>
</dbReference>
<dbReference type="GeneID" id="8621069"/>
<dbReference type="KEGG" id="ddi:DDB_G0277527"/>
<dbReference type="dictyBase" id="DDB_G0277527">
    <property type="gene designation" value="ddx20"/>
</dbReference>
<dbReference type="VEuPathDB" id="AmoebaDB:DDB_G0277527"/>
<dbReference type="eggNOG" id="KOG4284">
    <property type="taxonomic scope" value="Eukaryota"/>
</dbReference>
<dbReference type="HOGENOM" id="CLU_336009_0_0_1"/>
<dbReference type="InParanoid" id="Q54ZI9"/>
<dbReference type="OMA" id="KQYYKQY"/>
<dbReference type="PhylomeDB" id="Q54ZI9"/>
<dbReference type="PRO" id="PR:Q54ZI9"/>
<dbReference type="Proteomes" id="UP000002195">
    <property type="component" value="Chromosome 2"/>
</dbReference>
<dbReference type="GO" id="GO:0005634">
    <property type="term" value="C:nucleus"/>
    <property type="evidence" value="ECO:0007669"/>
    <property type="project" value="UniProtKB-SubCell"/>
</dbReference>
<dbReference type="GO" id="GO:0032797">
    <property type="term" value="C:SMN complex"/>
    <property type="evidence" value="ECO:0000318"/>
    <property type="project" value="GO_Central"/>
</dbReference>
<dbReference type="GO" id="GO:0005524">
    <property type="term" value="F:ATP binding"/>
    <property type="evidence" value="ECO:0007669"/>
    <property type="project" value="UniProtKB-KW"/>
</dbReference>
<dbReference type="GO" id="GO:0016887">
    <property type="term" value="F:ATP hydrolysis activity"/>
    <property type="evidence" value="ECO:0007669"/>
    <property type="project" value="RHEA"/>
</dbReference>
<dbReference type="GO" id="GO:0003729">
    <property type="term" value="F:mRNA binding"/>
    <property type="evidence" value="ECO:0000318"/>
    <property type="project" value="GO_Central"/>
</dbReference>
<dbReference type="GO" id="GO:0003724">
    <property type="term" value="F:RNA helicase activity"/>
    <property type="evidence" value="ECO:0000318"/>
    <property type="project" value="GO_Central"/>
</dbReference>
<dbReference type="GO" id="GO:0000387">
    <property type="term" value="P:spliceosomal snRNP assembly"/>
    <property type="evidence" value="ECO:0000318"/>
    <property type="project" value="GO_Central"/>
</dbReference>
<dbReference type="CDD" id="cd18787">
    <property type="entry name" value="SF2_C_DEAD"/>
    <property type="match status" value="1"/>
</dbReference>
<dbReference type="Gene3D" id="3.40.50.300">
    <property type="entry name" value="P-loop containing nucleotide triphosphate hydrolases"/>
    <property type="match status" value="2"/>
</dbReference>
<dbReference type="InterPro" id="IPR011545">
    <property type="entry name" value="DEAD/DEAH_box_helicase_dom"/>
</dbReference>
<dbReference type="InterPro" id="IPR014001">
    <property type="entry name" value="Helicase_ATP-bd"/>
</dbReference>
<dbReference type="InterPro" id="IPR001650">
    <property type="entry name" value="Helicase_C-like"/>
</dbReference>
<dbReference type="InterPro" id="IPR027417">
    <property type="entry name" value="P-loop_NTPase"/>
</dbReference>
<dbReference type="InterPro" id="IPR000629">
    <property type="entry name" value="RNA-helicase_DEAD-box_CS"/>
</dbReference>
<dbReference type="InterPro" id="IPR014014">
    <property type="entry name" value="RNA_helicase_DEAD_Q_motif"/>
</dbReference>
<dbReference type="PANTHER" id="PTHR47958">
    <property type="entry name" value="ATP-DEPENDENT RNA HELICASE DBP3"/>
    <property type="match status" value="1"/>
</dbReference>
<dbReference type="Pfam" id="PF00270">
    <property type="entry name" value="DEAD"/>
    <property type="match status" value="1"/>
</dbReference>
<dbReference type="Pfam" id="PF00271">
    <property type="entry name" value="Helicase_C"/>
    <property type="match status" value="1"/>
</dbReference>
<dbReference type="SMART" id="SM00487">
    <property type="entry name" value="DEXDc"/>
    <property type="match status" value="1"/>
</dbReference>
<dbReference type="SMART" id="SM00490">
    <property type="entry name" value="HELICc"/>
    <property type="match status" value="1"/>
</dbReference>
<dbReference type="SUPFAM" id="SSF52540">
    <property type="entry name" value="P-loop containing nucleoside triphosphate hydrolases"/>
    <property type="match status" value="1"/>
</dbReference>
<dbReference type="PROSITE" id="PS00039">
    <property type="entry name" value="DEAD_ATP_HELICASE"/>
    <property type="match status" value="1"/>
</dbReference>
<dbReference type="PROSITE" id="PS51192">
    <property type="entry name" value="HELICASE_ATP_BIND_1"/>
    <property type="match status" value="1"/>
</dbReference>
<dbReference type="PROSITE" id="PS51194">
    <property type="entry name" value="HELICASE_CTER"/>
    <property type="match status" value="1"/>
</dbReference>
<dbReference type="PROSITE" id="PS51195">
    <property type="entry name" value="Q_MOTIF"/>
    <property type="match status" value="1"/>
</dbReference>
<proteinExistence type="inferred from homology"/>